<name>Y2304_ARTS2</name>
<feature type="chain" id="PRO_1000045271" description="Probable transcriptional regulatory protein Arth_2304">
    <location>
        <begin position="1"/>
        <end position="251"/>
    </location>
</feature>
<evidence type="ECO:0000255" key="1">
    <source>
        <dbReference type="HAMAP-Rule" id="MF_00693"/>
    </source>
</evidence>
<keyword id="KW-0963">Cytoplasm</keyword>
<keyword id="KW-0238">DNA-binding</keyword>
<keyword id="KW-1185">Reference proteome</keyword>
<keyword id="KW-0804">Transcription</keyword>
<keyword id="KW-0805">Transcription regulation</keyword>
<reference key="1">
    <citation type="journal article" date="2013" name="Stand. Genomic Sci.">
        <title>Complete genome sequence of Arthrobacter sp. strain FB24.</title>
        <authorList>
            <person name="Nakatsu C.H."/>
            <person name="Barabote R."/>
            <person name="Thompson S."/>
            <person name="Bruce D."/>
            <person name="Detter C."/>
            <person name="Brettin T."/>
            <person name="Han C."/>
            <person name="Beasley F."/>
            <person name="Chen W."/>
            <person name="Konopka A."/>
            <person name="Xie G."/>
        </authorList>
    </citation>
    <scope>NUCLEOTIDE SEQUENCE [LARGE SCALE GENOMIC DNA]</scope>
    <source>
        <strain>FB24</strain>
    </source>
</reference>
<sequence>MSGHSKWATTKHKKAILDSRRAKSFAKLIKNIEVAARMGGPDLAGNPSLELAVTKAKKTSVPADNIDRAIKRGAGLTGEVVDYTEIMYECRGPQGSALLIECLTDNKNRAASEVRLAISRNGGTIADPGSVSYLFSRKGVVTLPKNGLSEDDVLMAVLDAGAEEVKDNGETFEIHSDPKDLQAVRDALKDAGIDYDTDEAEFVPSMEVPLDLDAAKKFMKLVDALEELDDVQNVYSNADLSDEVQAALEAE</sequence>
<comment type="subcellular location">
    <subcellularLocation>
        <location evidence="1">Cytoplasm</location>
    </subcellularLocation>
</comment>
<comment type="similarity">
    <text evidence="1">Belongs to the TACO1 family.</text>
</comment>
<organism>
    <name type="scientific">Arthrobacter sp. (strain FB24)</name>
    <dbReference type="NCBI Taxonomy" id="290399"/>
    <lineage>
        <taxon>Bacteria</taxon>
        <taxon>Bacillati</taxon>
        <taxon>Actinomycetota</taxon>
        <taxon>Actinomycetes</taxon>
        <taxon>Micrococcales</taxon>
        <taxon>Micrococcaceae</taxon>
        <taxon>Arthrobacter</taxon>
    </lineage>
</organism>
<proteinExistence type="inferred from homology"/>
<protein>
    <recommendedName>
        <fullName evidence="1">Probable transcriptional regulatory protein Arth_2304</fullName>
    </recommendedName>
</protein>
<accession>A0JXB4</accession>
<gene>
    <name type="ordered locus">Arth_2304</name>
</gene>
<dbReference type="EMBL" id="CP000454">
    <property type="protein sequence ID" value="ABK03684.1"/>
    <property type="molecule type" value="Genomic_DNA"/>
</dbReference>
<dbReference type="RefSeq" id="WP_011692148.1">
    <property type="nucleotide sequence ID" value="NC_008541.1"/>
</dbReference>
<dbReference type="SMR" id="A0JXB4"/>
<dbReference type="STRING" id="290399.Arth_2304"/>
<dbReference type="KEGG" id="art:Arth_2304"/>
<dbReference type="eggNOG" id="COG0217">
    <property type="taxonomic scope" value="Bacteria"/>
</dbReference>
<dbReference type="HOGENOM" id="CLU_062974_2_2_11"/>
<dbReference type="OrthoDB" id="9781053at2"/>
<dbReference type="Proteomes" id="UP000000754">
    <property type="component" value="Chromosome"/>
</dbReference>
<dbReference type="GO" id="GO:0005829">
    <property type="term" value="C:cytosol"/>
    <property type="evidence" value="ECO:0007669"/>
    <property type="project" value="TreeGrafter"/>
</dbReference>
<dbReference type="GO" id="GO:0003677">
    <property type="term" value="F:DNA binding"/>
    <property type="evidence" value="ECO:0007669"/>
    <property type="project" value="UniProtKB-UniRule"/>
</dbReference>
<dbReference type="GO" id="GO:0006355">
    <property type="term" value="P:regulation of DNA-templated transcription"/>
    <property type="evidence" value="ECO:0007669"/>
    <property type="project" value="UniProtKB-UniRule"/>
</dbReference>
<dbReference type="FunFam" id="1.10.10.200:FF:000002">
    <property type="entry name" value="Probable transcriptional regulatory protein CLM62_37755"/>
    <property type="match status" value="1"/>
</dbReference>
<dbReference type="Gene3D" id="1.10.10.200">
    <property type="match status" value="1"/>
</dbReference>
<dbReference type="Gene3D" id="3.30.70.980">
    <property type="match status" value="2"/>
</dbReference>
<dbReference type="HAMAP" id="MF_00693">
    <property type="entry name" value="Transcrip_reg_TACO1"/>
    <property type="match status" value="1"/>
</dbReference>
<dbReference type="InterPro" id="IPR017856">
    <property type="entry name" value="Integrase-like_N"/>
</dbReference>
<dbReference type="InterPro" id="IPR048300">
    <property type="entry name" value="TACO1_YebC-like_2nd/3rd_dom"/>
</dbReference>
<dbReference type="InterPro" id="IPR049083">
    <property type="entry name" value="TACO1_YebC_N"/>
</dbReference>
<dbReference type="InterPro" id="IPR002876">
    <property type="entry name" value="Transcrip_reg_TACO1-like"/>
</dbReference>
<dbReference type="InterPro" id="IPR026564">
    <property type="entry name" value="Transcrip_reg_TACO1-like_dom3"/>
</dbReference>
<dbReference type="InterPro" id="IPR029072">
    <property type="entry name" value="YebC-like"/>
</dbReference>
<dbReference type="NCBIfam" id="NF001030">
    <property type="entry name" value="PRK00110.1"/>
    <property type="match status" value="1"/>
</dbReference>
<dbReference type="NCBIfam" id="NF009044">
    <property type="entry name" value="PRK12378.1"/>
    <property type="match status" value="1"/>
</dbReference>
<dbReference type="NCBIfam" id="TIGR01033">
    <property type="entry name" value="YebC/PmpR family DNA-binding transcriptional regulator"/>
    <property type="match status" value="1"/>
</dbReference>
<dbReference type="PANTHER" id="PTHR12532:SF6">
    <property type="entry name" value="TRANSCRIPTIONAL REGULATORY PROTEIN YEBC-RELATED"/>
    <property type="match status" value="1"/>
</dbReference>
<dbReference type="PANTHER" id="PTHR12532">
    <property type="entry name" value="TRANSLATIONAL ACTIVATOR OF CYTOCHROME C OXIDASE 1"/>
    <property type="match status" value="1"/>
</dbReference>
<dbReference type="Pfam" id="PF20772">
    <property type="entry name" value="TACO1_YebC_N"/>
    <property type="match status" value="1"/>
</dbReference>
<dbReference type="Pfam" id="PF01709">
    <property type="entry name" value="Transcrip_reg"/>
    <property type="match status" value="1"/>
</dbReference>
<dbReference type="SUPFAM" id="SSF75625">
    <property type="entry name" value="YebC-like"/>
    <property type="match status" value="1"/>
</dbReference>